<organism>
    <name type="scientific">Actinobacillus pleuropneumoniae serotype 7 (strain AP76)</name>
    <dbReference type="NCBI Taxonomy" id="537457"/>
    <lineage>
        <taxon>Bacteria</taxon>
        <taxon>Pseudomonadati</taxon>
        <taxon>Pseudomonadota</taxon>
        <taxon>Gammaproteobacteria</taxon>
        <taxon>Pasteurellales</taxon>
        <taxon>Pasteurellaceae</taxon>
        <taxon>Actinobacillus</taxon>
    </lineage>
</organism>
<proteinExistence type="inferred from homology"/>
<name>FABA_ACTP7</name>
<protein>
    <recommendedName>
        <fullName evidence="1">3-hydroxydecanoyl-[acyl-carrier-protein] dehydratase</fullName>
        <ecNumber evidence="1">4.2.1.59</ecNumber>
    </recommendedName>
    <alternativeName>
        <fullName evidence="1">3-hydroxyacyl-[acyl-carrier-protein] dehydratase FabA</fullName>
    </alternativeName>
    <alternativeName>
        <fullName evidence="1">Beta-hydroxydecanoyl thioester dehydrase</fullName>
    </alternativeName>
    <alternativeName>
        <fullName evidence="1">Trans-2-decenoyl-[acyl-carrier-protein] isomerase</fullName>
        <ecNumber evidence="1">5.3.3.14</ecNumber>
    </alternativeName>
</protein>
<accession>B3H2V8</accession>
<gene>
    <name evidence="1" type="primary">fabA</name>
    <name type="ordered locus">APP7_1976</name>
</gene>
<evidence type="ECO:0000255" key="1">
    <source>
        <dbReference type="HAMAP-Rule" id="MF_00405"/>
    </source>
</evidence>
<reference key="1">
    <citation type="submission" date="2008-06" db="EMBL/GenBank/DDBJ databases">
        <title>Genome and proteome analysis of A. pleuropneumoniae serotype 7.</title>
        <authorList>
            <person name="Linke B."/>
            <person name="Buettner F."/>
            <person name="Martinez-Arias R."/>
            <person name="Goesmann A."/>
            <person name="Baltes N."/>
            <person name="Tegetmeyer H."/>
            <person name="Singh M."/>
            <person name="Gerlach G.F."/>
        </authorList>
    </citation>
    <scope>NUCLEOTIDE SEQUENCE [LARGE SCALE GENOMIC DNA]</scope>
    <source>
        <strain>AP76</strain>
    </source>
</reference>
<keyword id="KW-0963">Cytoplasm</keyword>
<keyword id="KW-0275">Fatty acid biosynthesis</keyword>
<keyword id="KW-0276">Fatty acid metabolism</keyword>
<keyword id="KW-0413">Isomerase</keyword>
<keyword id="KW-0444">Lipid biosynthesis</keyword>
<keyword id="KW-0443">Lipid metabolism</keyword>
<keyword id="KW-0456">Lyase</keyword>
<comment type="function">
    <text evidence="1">Necessary for the introduction of cis unsaturation into fatty acids. Catalyzes the dehydration of (3R)-3-hydroxydecanoyl-ACP to E-(2)-decenoyl-ACP and then its isomerization to Z-(3)-decenoyl-ACP. Can catalyze the dehydratase reaction for beta-hydroxyacyl-ACPs with saturated chain lengths up to 16:0, being most active on intermediate chain length.</text>
</comment>
<comment type="catalytic activity">
    <reaction evidence="1">
        <text>a (3R)-hydroxyacyl-[ACP] = a (2E)-enoyl-[ACP] + H2O</text>
        <dbReference type="Rhea" id="RHEA:13097"/>
        <dbReference type="Rhea" id="RHEA-COMP:9925"/>
        <dbReference type="Rhea" id="RHEA-COMP:9945"/>
        <dbReference type="ChEBI" id="CHEBI:15377"/>
        <dbReference type="ChEBI" id="CHEBI:78784"/>
        <dbReference type="ChEBI" id="CHEBI:78827"/>
        <dbReference type="EC" id="4.2.1.59"/>
    </reaction>
</comment>
<comment type="catalytic activity">
    <reaction evidence="1">
        <text>(3R)-hydroxydecanoyl-[ACP] = (2E)-decenoyl-[ACP] + H2O</text>
        <dbReference type="Rhea" id="RHEA:41860"/>
        <dbReference type="Rhea" id="RHEA-COMP:9638"/>
        <dbReference type="Rhea" id="RHEA-COMP:9639"/>
        <dbReference type="ChEBI" id="CHEBI:15377"/>
        <dbReference type="ChEBI" id="CHEBI:78466"/>
        <dbReference type="ChEBI" id="CHEBI:78467"/>
    </reaction>
</comment>
<comment type="catalytic activity">
    <reaction evidence="1">
        <text>(2E)-decenoyl-[ACP] = (3Z)-decenoyl-[ACP]</text>
        <dbReference type="Rhea" id="RHEA:23568"/>
        <dbReference type="Rhea" id="RHEA-COMP:9639"/>
        <dbReference type="Rhea" id="RHEA-COMP:9927"/>
        <dbReference type="ChEBI" id="CHEBI:78467"/>
        <dbReference type="ChEBI" id="CHEBI:78798"/>
        <dbReference type="EC" id="5.3.3.14"/>
    </reaction>
</comment>
<comment type="pathway">
    <text evidence="1">Lipid metabolism; fatty acid biosynthesis.</text>
</comment>
<comment type="subunit">
    <text evidence="1">Homodimer.</text>
</comment>
<comment type="subcellular location">
    <subcellularLocation>
        <location evidence="1">Cytoplasm</location>
    </subcellularLocation>
</comment>
<comment type="similarity">
    <text evidence="1">Belongs to the thioester dehydratase family. FabA subfamily.</text>
</comment>
<feature type="chain" id="PRO_1000201167" description="3-hydroxydecanoyl-[acyl-carrier-protein] dehydratase">
    <location>
        <begin position="1"/>
        <end position="176"/>
    </location>
</feature>
<feature type="active site" evidence="1">
    <location>
        <position position="75"/>
    </location>
</feature>
<dbReference type="EC" id="4.2.1.59" evidence="1"/>
<dbReference type="EC" id="5.3.3.14" evidence="1"/>
<dbReference type="EMBL" id="CP001091">
    <property type="protein sequence ID" value="ACE62628.1"/>
    <property type="molecule type" value="Genomic_DNA"/>
</dbReference>
<dbReference type="RefSeq" id="WP_005602774.1">
    <property type="nucleotide sequence ID" value="NC_010939.1"/>
</dbReference>
<dbReference type="SMR" id="B3H2V8"/>
<dbReference type="KEGG" id="apa:APP7_1976"/>
<dbReference type="HOGENOM" id="CLU_097925_0_0_6"/>
<dbReference type="UniPathway" id="UPA00094"/>
<dbReference type="Proteomes" id="UP000001226">
    <property type="component" value="Chromosome"/>
</dbReference>
<dbReference type="GO" id="GO:0005737">
    <property type="term" value="C:cytoplasm"/>
    <property type="evidence" value="ECO:0007669"/>
    <property type="project" value="UniProtKB-SubCell"/>
</dbReference>
<dbReference type="GO" id="GO:0019171">
    <property type="term" value="F:(3R)-hydroxyacyl-[acyl-carrier-protein] dehydratase activity"/>
    <property type="evidence" value="ECO:0007669"/>
    <property type="project" value="UniProtKB-UniRule"/>
</dbReference>
<dbReference type="GO" id="GO:0034017">
    <property type="term" value="F:trans-2-decenoyl-acyl-carrier-protein isomerase activity"/>
    <property type="evidence" value="ECO:0007669"/>
    <property type="project" value="UniProtKB-UniRule"/>
</dbReference>
<dbReference type="GO" id="GO:0006636">
    <property type="term" value="P:unsaturated fatty acid biosynthetic process"/>
    <property type="evidence" value="ECO:0007669"/>
    <property type="project" value="UniProtKB-UniRule"/>
</dbReference>
<dbReference type="CDD" id="cd01287">
    <property type="entry name" value="FabA"/>
    <property type="match status" value="1"/>
</dbReference>
<dbReference type="FunFam" id="3.10.129.10:FF:000003">
    <property type="entry name" value="3-hydroxydecanoyl-[acyl-carrier-protein] dehydratase"/>
    <property type="match status" value="1"/>
</dbReference>
<dbReference type="Gene3D" id="3.10.129.10">
    <property type="entry name" value="Hotdog Thioesterase"/>
    <property type="match status" value="1"/>
</dbReference>
<dbReference type="HAMAP" id="MF_00405">
    <property type="entry name" value="FabA"/>
    <property type="match status" value="1"/>
</dbReference>
<dbReference type="InterPro" id="IPR010083">
    <property type="entry name" value="FabA"/>
</dbReference>
<dbReference type="InterPro" id="IPR013114">
    <property type="entry name" value="FabA_FabZ"/>
</dbReference>
<dbReference type="InterPro" id="IPR029069">
    <property type="entry name" value="HotDog_dom_sf"/>
</dbReference>
<dbReference type="NCBIfam" id="TIGR01749">
    <property type="entry name" value="fabA"/>
    <property type="match status" value="1"/>
</dbReference>
<dbReference type="NCBIfam" id="NF003509">
    <property type="entry name" value="PRK05174.1"/>
    <property type="match status" value="1"/>
</dbReference>
<dbReference type="PANTHER" id="PTHR30272">
    <property type="entry name" value="3-HYDROXYACYL-[ACYL-CARRIER-PROTEIN] DEHYDRATASE"/>
    <property type="match status" value="1"/>
</dbReference>
<dbReference type="PANTHER" id="PTHR30272:SF8">
    <property type="entry name" value="3-HYDROXYDECANOYL-[ACYL-CARRIER-PROTEIN] DEHYDRATASE"/>
    <property type="match status" value="1"/>
</dbReference>
<dbReference type="Pfam" id="PF07977">
    <property type="entry name" value="FabA"/>
    <property type="match status" value="1"/>
</dbReference>
<dbReference type="SUPFAM" id="SSF54637">
    <property type="entry name" value="Thioesterase/thiol ester dehydrase-isomerase"/>
    <property type="match status" value="1"/>
</dbReference>
<sequence>MNTCTPNIKSSYTYEDLLASGRGELFGKEGPQLPAPTMLMMDRINLMTENGGLFDKGYIEAELDIHPDLPFFSCHFIGDPVMPGCLGLDAMWQLVGFFLGWIGGKGKGRALGVGEVKFTGQILPNAKKVTYRIHMKRVINRKLVMGMADGEVEVDGRVIYTATDLKVGLFQDTSAF</sequence>